<organism>
    <name type="scientific">Leptospira interrogans serogroup Icterohaemorrhagiae serovar Lai (strain 56601)</name>
    <dbReference type="NCBI Taxonomy" id="189518"/>
    <lineage>
        <taxon>Bacteria</taxon>
        <taxon>Pseudomonadati</taxon>
        <taxon>Spirochaetota</taxon>
        <taxon>Spirochaetia</taxon>
        <taxon>Leptospirales</taxon>
        <taxon>Leptospiraceae</taxon>
        <taxon>Leptospira</taxon>
    </lineage>
</organism>
<protein>
    <recommendedName>
        <fullName evidence="1">3-deoxy-manno-octulosonate cytidylyltransferase</fullName>
        <ecNumber evidence="1">2.7.7.38</ecNumber>
    </recommendedName>
    <alternativeName>
        <fullName evidence="1">CMP-2-keto-3-deoxyoctulosonic acid synthase</fullName>
        <shortName evidence="1">CKS</shortName>
        <shortName evidence="1">CMP-KDO synthase</shortName>
    </alternativeName>
</protein>
<reference key="1">
    <citation type="journal article" date="2003" name="Nature">
        <title>Unique physiological and pathogenic features of Leptospira interrogans revealed by whole-genome sequencing.</title>
        <authorList>
            <person name="Ren S.-X."/>
            <person name="Fu G."/>
            <person name="Jiang X.-G."/>
            <person name="Zeng R."/>
            <person name="Miao Y.-G."/>
            <person name="Xu H."/>
            <person name="Zhang Y.-X."/>
            <person name="Xiong H."/>
            <person name="Lu G."/>
            <person name="Lu L.-F."/>
            <person name="Jiang H.-Q."/>
            <person name="Jia J."/>
            <person name="Tu Y.-F."/>
            <person name="Jiang J.-X."/>
            <person name="Gu W.-Y."/>
            <person name="Zhang Y.-Q."/>
            <person name="Cai Z."/>
            <person name="Sheng H.-H."/>
            <person name="Yin H.-F."/>
            <person name="Zhang Y."/>
            <person name="Zhu G.-F."/>
            <person name="Wan M."/>
            <person name="Huang H.-L."/>
            <person name="Qian Z."/>
            <person name="Wang S.-Y."/>
            <person name="Ma W."/>
            <person name="Yao Z.-J."/>
            <person name="Shen Y."/>
            <person name="Qiang B.-Q."/>
            <person name="Xia Q.-C."/>
            <person name="Guo X.-K."/>
            <person name="Danchin A."/>
            <person name="Saint Girons I."/>
            <person name="Somerville R.L."/>
            <person name="Wen Y.-M."/>
            <person name="Shi M.-H."/>
            <person name="Chen Z."/>
            <person name="Xu J.-G."/>
            <person name="Zhao G.-P."/>
        </authorList>
    </citation>
    <scope>NUCLEOTIDE SEQUENCE [LARGE SCALE GENOMIC DNA]</scope>
    <source>
        <strain>56601</strain>
    </source>
</reference>
<feature type="chain" id="PRO_0000370087" description="3-deoxy-manno-octulosonate cytidylyltransferase">
    <location>
        <begin position="1"/>
        <end position="247"/>
    </location>
</feature>
<accession>Q8F0C3</accession>
<gene>
    <name evidence="1" type="primary">kdsB</name>
    <name type="ordered locus">LA_3573</name>
</gene>
<comment type="function">
    <text evidence="1">Activates KDO (a required 8-carbon sugar) for incorporation into bacterial lipopolysaccharide in Gram-negative bacteria.</text>
</comment>
<comment type="catalytic activity">
    <reaction evidence="1">
        <text>3-deoxy-alpha-D-manno-oct-2-ulosonate + CTP = CMP-3-deoxy-beta-D-manno-octulosonate + diphosphate</text>
        <dbReference type="Rhea" id="RHEA:23448"/>
        <dbReference type="ChEBI" id="CHEBI:33019"/>
        <dbReference type="ChEBI" id="CHEBI:37563"/>
        <dbReference type="ChEBI" id="CHEBI:85986"/>
        <dbReference type="ChEBI" id="CHEBI:85987"/>
        <dbReference type="EC" id="2.7.7.38"/>
    </reaction>
</comment>
<comment type="pathway">
    <text evidence="1">Nucleotide-sugar biosynthesis; CMP-3-deoxy-D-manno-octulosonate biosynthesis; CMP-3-deoxy-D-manno-octulosonate from 3-deoxy-D-manno-octulosonate and CTP: step 1/1.</text>
</comment>
<comment type="pathway">
    <text evidence="1">Bacterial outer membrane biogenesis; lipopolysaccharide biosynthesis.</text>
</comment>
<comment type="subcellular location">
    <subcellularLocation>
        <location evidence="1">Cytoplasm</location>
    </subcellularLocation>
</comment>
<comment type="similarity">
    <text evidence="1">Belongs to the KdsB family.</text>
</comment>
<proteinExistence type="inferred from homology"/>
<name>KDSB_LEPIN</name>
<keyword id="KW-0963">Cytoplasm</keyword>
<keyword id="KW-0448">Lipopolysaccharide biosynthesis</keyword>
<keyword id="KW-0548">Nucleotidyltransferase</keyword>
<keyword id="KW-1185">Reference proteome</keyword>
<keyword id="KW-0808">Transferase</keyword>
<dbReference type="EC" id="2.7.7.38" evidence="1"/>
<dbReference type="EMBL" id="AE010300">
    <property type="protein sequence ID" value="AAN50771.2"/>
    <property type="molecule type" value="Genomic_DNA"/>
</dbReference>
<dbReference type="RefSeq" id="NP_713753.2">
    <property type="nucleotide sequence ID" value="NC_004342.2"/>
</dbReference>
<dbReference type="RefSeq" id="WP_000721859.1">
    <property type="nucleotide sequence ID" value="NC_004342.2"/>
</dbReference>
<dbReference type="SMR" id="Q8F0C3"/>
<dbReference type="FunCoup" id="Q8F0C3">
    <property type="interactions" value="379"/>
</dbReference>
<dbReference type="STRING" id="189518.LA_3573"/>
<dbReference type="PaxDb" id="189518-LA_3573"/>
<dbReference type="EnsemblBacteria" id="AAN50771">
    <property type="protein sequence ID" value="AAN50771"/>
    <property type="gene ID" value="LA_3573"/>
</dbReference>
<dbReference type="GeneID" id="61143969"/>
<dbReference type="KEGG" id="lil:LA_3573"/>
<dbReference type="PATRIC" id="fig|189518.3.peg.3542"/>
<dbReference type="HOGENOM" id="CLU_065038_0_1_12"/>
<dbReference type="InParanoid" id="Q8F0C3"/>
<dbReference type="OrthoDB" id="9815559at2"/>
<dbReference type="UniPathway" id="UPA00030"/>
<dbReference type="UniPathway" id="UPA00358">
    <property type="reaction ID" value="UER00476"/>
</dbReference>
<dbReference type="Proteomes" id="UP000001408">
    <property type="component" value="Chromosome I"/>
</dbReference>
<dbReference type="GO" id="GO:0005829">
    <property type="term" value="C:cytosol"/>
    <property type="evidence" value="ECO:0000318"/>
    <property type="project" value="GO_Central"/>
</dbReference>
<dbReference type="GO" id="GO:0008690">
    <property type="term" value="F:3-deoxy-manno-octulosonate cytidylyltransferase activity"/>
    <property type="evidence" value="ECO:0000318"/>
    <property type="project" value="GO_Central"/>
</dbReference>
<dbReference type="GO" id="GO:0033468">
    <property type="term" value="P:CMP-keto-3-deoxy-D-manno-octulosonic acid biosynthetic process"/>
    <property type="evidence" value="ECO:0007669"/>
    <property type="project" value="UniProtKB-UniRule"/>
</dbReference>
<dbReference type="GO" id="GO:0009103">
    <property type="term" value="P:lipopolysaccharide biosynthetic process"/>
    <property type="evidence" value="ECO:0007669"/>
    <property type="project" value="UniProtKB-UniRule"/>
</dbReference>
<dbReference type="CDD" id="cd02517">
    <property type="entry name" value="CMP-KDO-Synthetase"/>
    <property type="match status" value="1"/>
</dbReference>
<dbReference type="FunFam" id="3.90.550.10:FF:000011">
    <property type="entry name" value="3-deoxy-manno-octulosonate cytidylyltransferase"/>
    <property type="match status" value="1"/>
</dbReference>
<dbReference type="Gene3D" id="3.90.550.10">
    <property type="entry name" value="Spore Coat Polysaccharide Biosynthesis Protein SpsA, Chain A"/>
    <property type="match status" value="1"/>
</dbReference>
<dbReference type="HAMAP" id="MF_00057">
    <property type="entry name" value="KdsB"/>
    <property type="match status" value="1"/>
</dbReference>
<dbReference type="InterPro" id="IPR003329">
    <property type="entry name" value="Cytidylyl_trans"/>
</dbReference>
<dbReference type="InterPro" id="IPR004528">
    <property type="entry name" value="KdsB"/>
</dbReference>
<dbReference type="InterPro" id="IPR029044">
    <property type="entry name" value="Nucleotide-diphossugar_trans"/>
</dbReference>
<dbReference type="NCBIfam" id="TIGR00466">
    <property type="entry name" value="kdsB"/>
    <property type="match status" value="1"/>
</dbReference>
<dbReference type="NCBIfam" id="NF003950">
    <property type="entry name" value="PRK05450.1-3"/>
    <property type="match status" value="1"/>
</dbReference>
<dbReference type="NCBIfam" id="NF003952">
    <property type="entry name" value="PRK05450.1-5"/>
    <property type="match status" value="1"/>
</dbReference>
<dbReference type="NCBIfam" id="NF009905">
    <property type="entry name" value="PRK13368.1"/>
    <property type="match status" value="1"/>
</dbReference>
<dbReference type="PANTHER" id="PTHR42866">
    <property type="entry name" value="3-DEOXY-MANNO-OCTULOSONATE CYTIDYLYLTRANSFERASE"/>
    <property type="match status" value="1"/>
</dbReference>
<dbReference type="PANTHER" id="PTHR42866:SF2">
    <property type="entry name" value="3-DEOXY-MANNO-OCTULOSONATE CYTIDYLYLTRANSFERASE, MITOCHONDRIAL"/>
    <property type="match status" value="1"/>
</dbReference>
<dbReference type="Pfam" id="PF02348">
    <property type="entry name" value="CTP_transf_3"/>
    <property type="match status" value="1"/>
</dbReference>
<dbReference type="SUPFAM" id="SSF53448">
    <property type="entry name" value="Nucleotide-diphospho-sugar transferases"/>
    <property type="match status" value="1"/>
</dbReference>
<evidence type="ECO:0000255" key="1">
    <source>
        <dbReference type="HAMAP-Rule" id="MF_00057"/>
    </source>
</evidence>
<sequence>MKKILGVIPARYASSRFPGKPLAKIGDKTMIEWTYRNASRSSVLSELVVATDDVRIHEVVQKFGGRSVMTSSDHPSGTDRIIEVANQFSEYSIIVNIQGDEPGIEPELIDGVASLKASHPEWAMSTAAVPLLDFSHAIDFNRVKVIIDRNGKAIYFSRSLIPSQFKTTVPLYRHLGIYGYDRDFLLQYNSLPKSNLEESESLEQLRAIEAGYGIGIYLSKEAGLSVDTPADLEIVIEDFKKRKWISE</sequence>